<accession>Q2FIM6</accession>
<reference key="1">
    <citation type="journal article" date="2006" name="Lancet">
        <title>Complete genome sequence of USA300, an epidemic clone of community-acquired meticillin-resistant Staphylococcus aureus.</title>
        <authorList>
            <person name="Diep B.A."/>
            <person name="Gill S.R."/>
            <person name="Chang R.F."/>
            <person name="Phan T.H."/>
            <person name="Chen J.H."/>
            <person name="Davidson M.G."/>
            <person name="Lin F."/>
            <person name="Lin J."/>
            <person name="Carleton H.A."/>
            <person name="Mongodin E.F."/>
            <person name="Sensabaugh G.F."/>
            <person name="Perdreau-Remington F."/>
        </authorList>
    </citation>
    <scope>NUCLEOTIDE SEQUENCE [LARGE SCALE GENOMIC DNA]</scope>
    <source>
        <strain>USA300</strain>
    </source>
</reference>
<protein>
    <recommendedName>
        <fullName evidence="1">Probable cell division protein WhiA</fullName>
    </recommendedName>
</protein>
<comment type="function">
    <text evidence="1">Involved in cell division and chromosome segregation.</text>
</comment>
<comment type="similarity">
    <text evidence="1">Belongs to the WhiA family.</text>
</comment>
<gene>
    <name evidence="1" type="primary">whiA</name>
    <name type="ordered locus">SAUSA300_0750</name>
</gene>
<feature type="chain" id="PRO_0000376564" description="Probable cell division protein WhiA">
    <location>
        <begin position="1"/>
        <end position="314"/>
    </location>
</feature>
<feature type="DNA-binding region" description="H-T-H motif" evidence="1">
    <location>
        <begin position="274"/>
        <end position="308"/>
    </location>
</feature>
<keyword id="KW-0131">Cell cycle</keyword>
<keyword id="KW-0132">Cell division</keyword>
<keyword id="KW-0238">DNA-binding</keyword>
<dbReference type="EMBL" id="CP000255">
    <property type="protein sequence ID" value="ABD21908.1"/>
    <property type="molecule type" value="Genomic_DNA"/>
</dbReference>
<dbReference type="SMR" id="Q2FIM6"/>
<dbReference type="KEGG" id="saa:SAUSA300_0750"/>
<dbReference type="HOGENOM" id="CLU_053282_0_0_9"/>
<dbReference type="Proteomes" id="UP000001939">
    <property type="component" value="Chromosome"/>
</dbReference>
<dbReference type="GO" id="GO:0003677">
    <property type="term" value="F:DNA binding"/>
    <property type="evidence" value="ECO:0007669"/>
    <property type="project" value="UniProtKB-UniRule"/>
</dbReference>
<dbReference type="GO" id="GO:0051301">
    <property type="term" value="P:cell division"/>
    <property type="evidence" value="ECO:0007669"/>
    <property type="project" value="UniProtKB-UniRule"/>
</dbReference>
<dbReference type="GO" id="GO:0043937">
    <property type="term" value="P:regulation of sporulation"/>
    <property type="evidence" value="ECO:0007669"/>
    <property type="project" value="InterPro"/>
</dbReference>
<dbReference type="FunFam" id="3.10.28.10:FF:000002">
    <property type="entry name" value="Probable cell division protein WhiA"/>
    <property type="match status" value="1"/>
</dbReference>
<dbReference type="Gene3D" id="3.10.28.10">
    <property type="entry name" value="Homing endonucleases"/>
    <property type="match status" value="1"/>
</dbReference>
<dbReference type="HAMAP" id="MF_01420">
    <property type="entry name" value="HTH_type_WhiA"/>
    <property type="match status" value="1"/>
</dbReference>
<dbReference type="InterPro" id="IPR027434">
    <property type="entry name" value="Homing_endonucl"/>
</dbReference>
<dbReference type="InterPro" id="IPR018478">
    <property type="entry name" value="Sporu_reg_WhiA_N_dom"/>
</dbReference>
<dbReference type="InterPro" id="IPR003802">
    <property type="entry name" value="Sporulation_regulator_WhiA"/>
</dbReference>
<dbReference type="InterPro" id="IPR023054">
    <property type="entry name" value="Sporulation_regulator_WhiA_C"/>
</dbReference>
<dbReference type="InterPro" id="IPR039518">
    <property type="entry name" value="WhiA_LAGLIDADG_dom"/>
</dbReference>
<dbReference type="NCBIfam" id="TIGR00647">
    <property type="entry name" value="DNA_bind_WhiA"/>
    <property type="match status" value="1"/>
</dbReference>
<dbReference type="PANTHER" id="PTHR37307">
    <property type="entry name" value="CELL DIVISION PROTEIN WHIA-RELATED"/>
    <property type="match status" value="1"/>
</dbReference>
<dbReference type="PANTHER" id="PTHR37307:SF1">
    <property type="entry name" value="CELL DIVISION PROTEIN WHIA-RELATED"/>
    <property type="match status" value="1"/>
</dbReference>
<dbReference type="Pfam" id="PF02650">
    <property type="entry name" value="HTH_WhiA"/>
    <property type="match status" value="1"/>
</dbReference>
<dbReference type="Pfam" id="PF14527">
    <property type="entry name" value="LAGLIDADG_WhiA"/>
    <property type="match status" value="1"/>
</dbReference>
<dbReference type="Pfam" id="PF10298">
    <property type="entry name" value="WhiA_N"/>
    <property type="match status" value="1"/>
</dbReference>
<dbReference type="SUPFAM" id="SSF55608">
    <property type="entry name" value="Homing endonucleases"/>
    <property type="match status" value="1"/>
</dbReference>
<name>WHIA_STAA3</name>
<proteinExistence type="inferred from homology"/>
<organism>
    <name type="scientific">Staphylococcus aureus (strain USA300)</name>
    <dbReference type="NCBI Taxonomy" id="367830"/>
    <lineage>
        <taxon>Bacteria</taxon>
        <taxon>Bacillati</taxon>
        <taxon>Bacillota</taxon>
        <taxon>Bacilli</taxon>
        <taxon>Bacillales</taxon>
        <taxon>Staphylococcaceae</taxon>
        <taxon>Staphylococcus</taxon>
    </lineage>
</organism>
<evidence type="ECO:0000255" key="1">
    <source>
        <dbReference type="HAMAP-Rule" id="MF_01420"/>
    </source>
</evidence>
<sequence length="314" mass="35882">MSFASEMKNELTRIDVEEMNAKAELSALIRMNGALSLSNQQFVINVQTENATTARRIYSLIKRVFNVEVEILVRKKMKLKKNNIYICRTKMKAKEILDELGILKDGIFTHEIDHSMIQDDEMRRSYLRGAFLAGGSVNNPETSSYHLEIFSQNESHAEGLTKLMNSYELNAKHLERKKGSITYLKEAEKISDFLSLIGGYQALLKFEDVRIVRDMRNSVNRLVNCETANLNKTVSAAMKQVESIKLIDKEIGIENLPDRLREIARIRVEHQEISLKELGEMVSTGPISKSGVNHRLRKLNDLADKIRNGEQIEL</sequence>